<reference key="1">
    <citation type="journal article" date="1992" name="Genetics">
        <title>Variable rates of evolution among Drosophila opsin genes.</title>
        <authorList>
            <person name="Carulli J.P."/>
            <person name="Hartl D.L."/>
        </authorList>
    </citation>
    <scope>NUCLEOTIDE SEQUENCE [GENOMIC DNA]</scope>
    <source>
        <strain>Apple Hill</strain>
    </source>
</reference>
<reference key="2">
    <citation type="journal article" date="2002" name="Genome Biol.">
        <title>Assessing the impact of comparative genomic sequence data on the functional annotation of the Drosophila genome.</title>
        <authorList>
            <person name="Bergman C.M."/>
            <person name="Pfeiffer B.D."/>
            <person name="Rincon-Limas D.E."/>
            <person name="Hoskins R.A."/>
            <person name="Gnirke A."/>
            <person name="Mungall C.J."/>
            <person name="Wang A.M."/>
            <person name="Kronmiller B."/>
            <person name="Pacleb J.M."/>
            <person name="Park S."/>
            <person name="Stapleton M."/>
            <person name="Wan K.H."/>
            <person name="George R.A."/>
            <person name="de Jong P.J."/>
            <person name="Botas J."/>
            <person name="Rubin G.M."/>
            <person name="Celniker S.E."/>
        </authorList>
    </citation>
    <scope>NUCLEOTIDE SEQUENCE [GENOMIC DNA]</scope>
    <source>
        <strain>Tucson 14011-0121.4</strain>
    </source>
</reference>
<reference key="3">
    <citation type="journal article" date="2005" name="Genome Res.">
        <title>Comparative genome sequencing of Drosophila pseudoobscura: chromosomal, gene, and cis-element evolution.</title>
        <authorList>
            <person name="Richards S."/>
            <person name="Liu Y."/>
            <person name="Bettencourt B.R."/>
            <person name="Hradecky P."/>
            <person name="Letovsky S."/>
            <person name="Nielsen R."/>
            <person name="Thornton K."/>
            <person name="Hubisz M.J."/>
            <person name="Chen R."/>
            <person name="Meisel R.P."/>
            <person name="Couronne O."/>
            <person name="Hua S."/>
            <person name="Smith M.A."/>
            <person name="Zhang P."/>
            <person name="Liu J."/>
            <person name="Bussemaker H.J."/>
            <person name="van Batenburg M.F."/>
            <person name="Howells S.L."/>
            <person name="Scherer S.E."/>
            <person name="Sodergren E."/>
            <person name="Matthews B.B."/>
            <person name="Crosby M.A."/>
            <person name="Schroeder A.J."/>
            <person name="Ortiz-Barrientos D."/>
            <person name="Rives C.M."/>
            <person name="Metzker M.L."/>
            <person name="Muzny D.M."/>
            <person name="Scott G."/>
            <person name="Steffen D."/>
            <person name="Wheeler D.A."/>
            <person name="Worley K.C."/>
            <person name="Havlak P."/>
            <person name="Durbin K.J."/>
            <person name="Egan A."/>
            <person name="Gill R."/>
            <person name="Hume J."/>
            <person name="Morgan M.B."/>
            <person name="Miner G."/>
            <person name="Hamilton C."/>
            <person name="Huang Y."/>
            <person name="Waldron L."/>
            <person name="Verduzco D."/>
            <person name="Clerc-Blankenburg K.P."/>
            <person name="Dubchak I."/>
            <person name="Noor M.A.F."/>
            <person name="Anderson W."/>
            <person name="White K.P."/>
            <person name="Clark A.G."/>
            <person name="Schaeffer S.W."/>
            <person name="Gelbart W.M."/>
            <person name="Weinstock G.M."/>
            <person name="Gibbs R.A."/>
        </authorList>
    </citation>
    <scope>NUCLEOTIDE SEQUENCE [LARGE SCALE GENOMIC DNA]</scope>
    <source>
        <strain>MV2-25 / Tucson 14011-0121.94</strain>
    </source>
</reference>
<name>OPS3_DROPS</name>
<evidence type="ECO:0000255" key="1"/>
<evidence type="ECO:0000255" key="2">
    <source>
        <dbReference type="PROSITE-ProRule" id="PRU00521"/>
    </source>
</evidence>
<evidence type="ECO:0000305" key="3"/>
<proteinExistence type="evidence at protein level"/>
<organism>
    <name type="scientific">Drosophila pseudoobscura pseudoobscura</name>
    <name type="common">Fruit fly</name>
    <dbReference type="NCBI Taxonomy" id="46245"/>
    <lineage>
        <taxon>Eukaryota</taxon>
        <taxon>Metazoa</taxon>
        <taxon>Ecdysozoa</taxon>
        <taxon>Arthropoda</taxon>
        <taxon>Hexapoda</taxon>
        <taxon>Insecta</taxon>
        <taxon>Pterygota</taxon>
        <taxon>Neoptera</taxon>
        <taxon>Endopterygota</taxon>
        <taxon>Diptera</taxon>
        <taxon>Brachycera</taxon>
        <taxon>Muscomorpha</taxon>
        <taxon>Ephydroidea</taxon>
        <taxon>Drosophilidae</taxon>
        <taxon>Drosophila</taxon>
        <taxon>Sophophora</taxon>
    </lineage>
</organism>
<keyword id="KW-0157">Chromophore</keyword>
<keyword id="KW-1015">Disulfide bond</keyword>
<keyword id="KW-0297">G-protein coupled receptor</keyword>
<keyword id="KW-0325">Glycoprotein</keyword>
<keyword id="KW-0472">Membrane</keyword>
<keyword id="KW-0597">Phosphoprotein</keyword>
<keyword id="KW-0600">Photoreceptor protein</keyword>
<keyword id="KW-0675">Receptor</keyword>
<keyword id="KW-1185">Reference proteome</keyword>
<keyword id="KW-0681">Retinal protein</keyword>
<keyword id="KW-0716">Sensory transduction</keyword>
<keyword id="KW-0807">Transducer</keyword>
<keyword id="KW-0812">Transmembrane</keyword>
<keyword id="KW-1133">Transmembrane helix</keyword>
<keyword id="KW-0844">Vision</keyword>
<gene>
    <name type="primary">Rh3</name>
    <name type="ORF">GA10619</name>
</gene>
<accession>P28680</accession>
<accession>Q294E9</accession>
<accession>Q8I1B3</accession>
<feature type="chain" id="PRO_0000197628" description="Opsin Rh3">
    <location>
        <begin position="1"/>
        <end position="382"/>
    </location>
</feature>
<feature type="topological domain" description="Extracellular">
    <location>
        <begin position="1"/>
        <end position="56"/>
    </location>
</feature>
<feature type="transmembrane region" description="Helical; Name=1" evidence="1">
    <location>
        <begin position="57"/>
        <end position="81"/>
    </location>
</feature>
<feature type="topological domain" description="Cytoplasmic">
    <location>
        <begin position="82"/>
        <end position="93"/>
    </location>
</feature>
<feature type="transmembrane region" description="Helical; Name=2" evidence="1">
    <location>
        <begin position="94"/>
        <end position="118"/>
    </location>
</feature>
<feature type="topological domain" description="Extracellular">
    <location>
        <begin position="119"/>
        <end position="132"/>
    </location>
</feature>
<feature type="transmembrane region" description="Helical; Name=3" evidence="1">
    <location>
        <begin position="133"/>
        <end position="152"/>
    </location>
</feature>
<feature type="topological domain" description="Cytoplasmic">
    <location>
        <begin position="153"/>
        <end position="170"/>
    </location>
</feature>
<feature type="transmembrane region" description="Helical; Name=4" evidence="1">
    <location>
        <begin position="171"/>
        <end position="195"/>
    </location>
</feature>
<feature type="topological domain" description="Extracellular">
    <location>
        <begin position="196"/>
        <end position="219"/>
    </location>
</feature>
<feature type="transmembrane region" description="Helical; Name=5" evidence="1">
    <location>
        <begin position="220"/>
        <end position="247"/>
    </location>
</feature>
<feature type="topological domain" description="Cytoplasmic">
    <location>
        <begin position="248"/>
        <end position="283"/>
    </location>
</feature>
<feature type="transmembrane region" description="Helical; Name=6" evidence="1">
    <location>
        <begin position="284"/>
        <end position="307"/>
    </location>
</feature>
<feature type="topological domain" description="Extracellular">
    <location>
        <begin position="308"/>
        <end position="315"/>
    </location>
</feature>
<feature type="transmembrane region" description="Helical; Name=7" evidence="1">
    <location>
        <begin position="316"/>
        <end position="340"/>
    </location>
</feature>
<feature type="topological domain" description="Cytoplasmic">
    <location>
        <begin position="341"/>
        <end position="382"/>
    </location>
</feature>
<feature type="modified residue" description="N6-(retinylidene)lysine">
    <location>
        <position position="327"/>
    </location>
</feature>
<feature type="glycosylation site" description="N-linked (GlcNAc...) asparagine" evidence="3">
    <location>
        <position position="12"/>
    </location>
</feature>
<feature type="disulfide bond" evidence="2">
    <location>
        <begin position="129"/>
        <end position="206"/>
    </location>
</feature>
<feature type="sequence conflict" description="In Ref. 1; CAA46710." evidence="3" ref="1">
    <original>A</original>
    <variation>R</variation>
    <location>
        <position position="365"/>
    </location>
</feature>
<protein>
    <recommendedName>
        <fullName>Opsin Rh3</fullName>
    </recommendedName>
    <alternativeName>
        <fullName>Inner R7 photoreceptor cells opsin</fullName>
    </alternativeName>
</protein>
<comment type="function">
    <text>Visual pigments are the light-absorbing molecules that mediate vision. They consist of an apoprotein, opsin, covalently linked to cis-retinal.</text>
</comment>
<comment type="subcellular location">
    <subcellularLocation>
        <location>Membrane</location>
        <topology>Multi-pass membrane protein</topology>
    </subcellularLocation>
</comment>
<comment type="PTM">
    <text>Phosphorylated on some or all of the serine and threonine residues present in the C-terminal region.</text>
</comment>
<comment type="miscellaneous">
    <text>Each Drosophila eye is composed of 800 facets or ommatidia. Each ommatidium contains 8 photoreceptor cells (R1-R8), the R1 to R6 cells are outer cells, while R7 and R8 are inner cells.</text>
</comment>
<comment type="miscellaneous">
    <text>Opsin Rh3 is sensitive to UV light.</text>
</comment>
<comment type="similarity">
    <text evidence="2">Belongs to the G-protein coupled receptor 1 family. Opsin subfamily.</text>
</comment>
<comment type="sequence caution" evidence="3">
    <conflict type="erroneous gene model prediction">
        <sequence resource="EMBL-CDS" id="EAL29015"/>
    </conflict>
</comment>
<sequence>MEYHNVSSVLGNVSSVLRPDARLSAESRLLGWNVPPDELRHIPEHWLIYPEPPESMNYLLGTLYIFFTVISMIGNGLVMWVFSAAKSLRTPSNILVINLAFCDFMMMIKTPIFIYNSFHQGYALGHLGCQIFGVIGSYTGIAAGATNAFIAYDRYNVITRPMEGKMTHGKAIAMIIFIYLYATPWVVACYTESWGRFVPEGYLTSCTFDYLTDNFDTRLFVACIFFFSFVCPTTMITYYYSQIVGHVFSHEKALRDQAKKMNVDSLRSNVDKSKEAAEIRIAKAAITICFLFFASWTPYGVMSLIGAFGDKTLLTPGATMIPACTCKMVACIDPFVYAISHPRYRMELQKRCPWLAISEKAPESAAAISTSTTQEQQQTTAA</sequence>
<dbReference type="EMBL" id="X65879">
    <property type="protein sequence ID" value="CAA46710.1"/>
    <property type="molecule type" value="Genomic_DNA"/>
</dbReference>
<dbReference type="EMBL" id="AY190949">
    <property type="protein sequence ID" value="AAO01058.1"/>
    <property type="molecule type" value="Genomic_DNA"/>
</dbReference>
<dbReference type="EMBL" id="CM000070">
    <property type="protein sequence ID" value="EAL29015.2"/>
    <property type="status" value="ALT_SEQ"/>
    <property type="molecule type" value="Genomic_DNA"/>
</dbReference>
<dbReference type="PIR" id="S40693">
    <property type="entry name" value="S40693"/>
</dbReference>
<dbReference type="RefSeq" id="XP_001359863.3">
    <property type="nucleotide sequence ID" value="XM_001359826.3"/>
</dbReference>
<dbReference type="SMR" id="P28680"/>
<dbReference type="FunCoup" id="P28680">
    <property type="interactions" value="16"/>
</dbReference>
<dbReference type="IntAct" id="P28680">
    <property type="interactions" value="1"/>
</dbReference>
<dbReference type="STRING" id="46245.P28680"/>
<dbReference type="GlyCosmos" id="P28680">
    <property type="glycosylation" value="1 site, No reported glycans"/>
</dbReference>
<dbReference type="EnsemblMetazoa" id="FBtr0286371">
    <property type="protein sequence ID" value="FBpp0284809"/>
    <property type="gene ID" value="FBgn0012709"/>
</dbReference>
<dbReference type="GeneID" id="4803062"/>
<dbReference type="KEGG" id="dpo:4803062"/>
<dbReference type="CTD" id="42398"/>
<dbReference type="eggNOG" id="KOG3656">
    <property type="taxonomic scope" value="Eukaryota"/>
</dbReference>
<dbReference type="InParanoid" id="P28680"/>
<dbReference type="ChiTaRS" id="Rh3">
    <property type="organism name" value="fly"/>
</dbReference>
<dbReference type="Proteomes" id="UP000001819">
    <property type="component" value="Chromosome 2"/>
</dbReference>
<dbReference type="Bgee" id="FBgn0012709">
    <property type="expression patterns" value="Expressed in insect adult head"/>
</dbReference>
<dbReference type="GO" id="GO:0016020">
    <property type="term" value="C:membrane"/>
    <property type="evidence" value="ECO:0007669"/>
    <property type="project" value="UniProtKB-SubCell"/>
</dbReference>
<dbReference type="GO" id="GO:0008020">
    <property type="term" value="F:G protein-coupled photoreceptor activity"/>
    <property type="evidence" value="ECO:0007669"/>
    <property type="project" value="UniProtKB-ARBA"/>
</dbReference>
<dbReference type="GO" id="GO:0007602">
    <property type="term" value="P:phototransduction"/>
    <property type="evidence" value="ECO:0007669"/>
    <property type="project" value="UniProtKB-KW"/>
</dbReference>
<dbReference type="GO" id="GO:0007601">
    <property type="term" value="P:visual perception"/>
    <property type="evidence" value="ECO:0007669"/>
    <property type="project" value="UniProtKB-KW"/>
</dbReference>
<dbReference type="CDD" id="cd15079">
    <property type="entry name" value="7tmA_photoreceptors_insect"/>
    <property type="match status" value="1"/>
</dbReference>
<dbReference type="FunFam" id="1.20.1070.10:FF:000044">
    <property type="entry name" value="Opsin, ultraviolet-sensitive"/>
    <property type="match status" value="1"/>
</dbReference>
<dbReference type="Gene3D" id="1.20.1070.10">
    <property type="entry name" value="Rhodopsin 7-helix transmembrane proteins"/>
    <property type="match status" value="1"/>
</dbReference>
<dbReference type="InterPro" id="IPR050125">
    <property type="entry name" value="GPCR_opsins"/>
</dbReference>
<dbReference type="InterPro" id="IPR000276">
    <property type="entry name" value="GPCR_Rhodpsn"/>
</dbReference>
<dbReference type="InterPro" id="IPR017452">
    <property type="entry name" value="GPCR_Rhodpsn_7TM"/>
</dbReference>
<dbReference type="InterPro" id="IPR001760">
    <property type="entry name" value="Opsin"/>
</dbReference>
<dbReference type="InterPro" id="IPR027430">
    <property type="entry name" value="Retinal_BS"/>
</dbReference>
<dbReference type="PANTHER" id="PTHR24240">
    <property type="entry name" value="OPSIN"/>
    <property type="match status" value="1"/>
</dbReference>
<dbReference type="Pfam" id="PF00001">
    <property type="entry name" value="7tm_1"/>
    <property type="match status" value="1"/>
</dbReference>
<dbReference type="PRINTS" id="PR00237">
    <property type="entry name" value="GPCRRHODOPSN"/>
</dbReference>
<dbReference type="PRINTS" id="PR00238">
    <property type="entry name" value="OPSIN"/>
</dbReference>
<dbReference type="PRINTS" id="PR00577">
    <property type="entry name" value="OPSINRH3RH4"/>
</dbReference>
<dbReference type="SUPFAM" id="SSF81321">
    <property type="entry name" value="Family A G protein-coupled receptor-like"/>
    <property type="match status" value="1"/>
</dbReference>
<dbReference type="PROSITE" id="PS00237">
    <property type="entry name" value="G_PROTEIN_RECEP_F1_1"/>
    <property type="match status" value="1"/>
</dbReference>
<dbReference type="PROSITE" id="PS50262">
    <property type="entry name" value="G_PROTEIN_RECEP_F1_2"/>
    <property type="match status" value="1"/>
</dbReference>
<dbReference type="PROSITE" id="PS00238">
    <property type="entry name" value="OPSIN"/>
    <property type="match status" value="1"/>
</dbReference>